<sequence>MTRIRRGYIARRRRTKIRLFASTFRGSHSRLTRTTTQQKIRALVSAHRDRGKQKRYFRRLWITRINAVIRDNRVFYSYSRLIHDLYKKQLLLNRKILAQIAISNRNCLYMISNEIIK</sequence>
<comment type="function">
    <text evidence="1">Binds directly to 23S ribosomal RNA and is necessary for the in vitro assembly process of the 50S ribosomal subunit. It is not involved in the protein synthesizing functions of that subunit.</text>
</comment>
<comment type="subcellular location">
    <subcellularLocation>
        <location>Plastid</location>
        <location>Chloroplast</location>
    </subcellularLocation>
</comment>
<comment type="similarity">
    <text evidence="1">Belongs to the bacterial ribosomal protein bL20 family.</text>
</comment>
<organism>
    <name type="scientific">Buxus microphylla</name>
    <name type="common">Littleleaf boxwood</name>
    <name type="synonym">Japanese boxwood</name>
    <dbReference type="NCBI Taxonomy" id="153571"/>
    <lineage>
        <taxon>Eukaryota</taxon>
        <taxon>Viridiplantae</taxon>
        <taxon>Streptophyta</taxon>
        <taxon>Embryophyta</taxon>
        <taxon>Tracheophyta</taxon>
        <taxon>Spermatophyta</taxon>
        <taxon>Magnoliopsida</taxon>
        <taxon>Buxales</taxon>
        <taxon>Buxaceae</taxon>
        <taxon>Buxus</taxon>
    </lineage>
</organism>
<proteinExistence type="inferred from homology"/>
<gene>
    <name evidence="1" type="primary">rpl20</name>
</gene>
<protein>
    <recommendedName>
        <fullName evidence="1">Large ribosomal subunit protein bL20c</fullName>
    </recommendedName>
    <alternativeName>
        <fullName evidence="2">50S ribosomal protein L20, chloroplastic</fullName>
    </alternativeName>
</protein>
<reference key="1">
    <citation type="journal article" date="2007" name="Mol. Phylogenet. Evol.">
        <title>Phylogenetic and evolutionary implications of complete chloroplast genome sequences of four early-diverging angiosperms: Buxus (Buxaceae), Chloranthus (Chloranthaceae), Dioscorea (Dioscoreaceae), and Illicium (Schisandraceae).</title>
        <authorList>
            <person name="Hansen D.R."/>
            <person name="Dastidar S.G."/>
            <person name="Cai Z."/>
            <person name="Penaflor C."/>
            <person name="Kuehl J.V."/>
            <person name="Boore J.L."/>
            <person name="Jansen R.K."/>
        </authorList>
    </citation>
    <scope>NUCLEOTIDE SEQUENCE [LARGE SCALE GENOMIC DNA]</scope>
</reference>
<name>RK20_BUXMI</name>
<accession>A6MM59</accession>
<keyword id="KW-0150">Chloroplast</keyword>
<keyword id="KW-0934">Plastid</keyword>
<keyword id="KW-0687">Ribonucleoprotein</keyword>
<keyword id="KW-0689">Ribosomal protein</keyword>
<keyword id="KW-0694">RNA-binding</keyword>
<keyword id="KW-0699">rRNA-binding</keyword>
<evidence type="ECO:0000255" key="1">
    <source>
        <dbReference type="HAMAP-Rule" id="MF_00382"/>
    </source>
</evidence>
<evidence type="ECO:0000305" key="2"/>
<dbReference type="EMBL" id="EF380351">
    <property type="protein sequence ID" value="ABQ45272.1"/>
    <property type="molecule type" value="Genomic_DNA"/>
</dbReference>
<dbReference type="RefSeq" id="YP_001294207.1">
    <property type="nucleotide sequence ID" value="NC_009599.1"/>
</dbReference>
<dbReference type="SMR" id="A6MM59"/>
<dbReference type="GeneID" id="5236837"/>
<dbReference type="GO" id="GO:0009507">
    <property type="term" value="C:chloroplast"/>
    <property type="evidence" value="ECO:0007669"/>
    <property type="project" value="UniProtKB-SubCell"/>
</dbReference>
<dbReference type="GO" id="GO:1990904">
    <property type="term" value="C:ribonucleoprotein complex"/>
    <property type="evidence" value="ECO:0007669"/>
    <property type="project" value="UniProtKB-KW"/>
</dbReference>
<dbReference type="GO" id="GO:0005840">
    <property type="term" value="C:ribosome"/>
    <property type="evidence" value="ECO:0007669"/>
    <property type="project" value="UniProtKB-KW"/>
</dbReference>
<dbReference type="GO" id="GO:0019843">
    <property type="term" value="F:rRNA binding"/>
    <property type="evidence" value="ECO:0007669"/>
    <property type="project" value="UniProtKB-UniRule"/>
</dbReference>
<dbReference type="GO" id="GO:0003735">
    <property type="term" value="F:structural constituent of ribosome"/>
    <property type="evidence" value="ECO:0007669"/>
    <property type="project" value="InterPro"/>
</dbReference>
<dbReference type="GO" id="GO:0000027">
    <property type="term" value="P:ribosomal large subunit assembly"/>
    <property type="evidence" value="ECO:0007669"/>
    <property type="project" value="UniProtKB-UniRule"/>
</dbReference>
<dbReference type="GO" id="GO:0006412">
    <property type="term" value="P:translation"/>
    <property type="evidence" value="ECO:0007669"/>
    <property type="project" value="InterPro"/>
</dbReference>
<dbReference type="CDD" id="cd07026">
    <property type="entry name" value="Ribosomal_L20"/>
    <property type="match status" value="1"/>
</dbReference>
<dbReference type="FunFam" id="1.10.1900.20:FF:000001">
    <property type="entry name" value="50S ribosomal protein L20"/>
    <property type="match status" value="1"/>
</dbReference>
<dbReference type="Gene3D" id="6.10.160.10">
    <property type="match status" value="1"/>
</dbReference>
<dbReference type="Gene3D" id="1.10.1900.20">
    <property type="entry name" value="Ribosomal protein L20"/>
    <property type="match status" value="1"/>
</dbReference>
<dbReference type="HAMAP" id="MF_00382">
    <property type="entry name" value="Ribosomal_bL20"/>
    <property type="match status" value="1"/>
</dbReference>
<dbReference type="InterPro" id="IPR005813">
    <property type="entry name" value="Ribosomal_bL20"/>
</dbReference>
<dbReference type="InterPro" id="IPR049946">
    <property type="entry name" value="RIBOSOMAL_L20_CS"/>
</dbReference>
<dbReference type="InterPro" id="IPR035566">
    <property type="entry name" value="Ribosomal_protein_bL20_C"/>
</dbReference>
<dbReference type="NCBIfam" id="TIGR01032">
    <property type="entry name" value="rplT_bact"/>
    <property type="match status" value="1"/>
</dbReference>
<dbReference type="PANTHER" id="PTHR10986">
    <property type="entry name" value="39S RIBOSOMAL PROTEIN L20"/>
    <property type="match status" value="1"/>
</dbReference>
<dbReference type="Pfam" id="PF00453">
    <property type="entry name" value="Ribosomal_L20"/>
    <property type="match status" value="1"/>
</dbReference>
<dbReference type="PRINTS" id="PR00062">
    <property type="entry name" value="RIBOSOMALL20"/>
</dbReference>
<dbReference type="SUPFAM" id="SSF74731">
    <property type="entry name" value="Ribosomal protein L20"/>
    <property type="match status" value="1"/>
</dbReference>
<dbReference type="PROSITE" id="PS00937">
    <property type="entry name" value="RIBOSOMAL_L20"/>
    <property type="match status" value="1"/>
</dbReference>
<geneLocation type="chloroplast"/>
<feature type="chain" id="PRO_0000355490" description="Large ribosomal subunit protein bL20c">
    <location>
        <begin position="1"/>
        <end position="117"/>
    </location>
</feature>